<gene>
    <name type="primary">Gsto2</name>
</gene>
<feature type="chain" id="PRO_0000239141" description="Glutathione S-transferase omega-2">
    <location>
        <begin position="1"/>
        <end position="248"/>
    </location>
</feature>
<feature type="domain" description="GST N-terminal">
    <location>
        <begin position="22"/>
        <end position="101"/>
    </location>
</feature>
<feature type="domain" description="GST C-terminal">
    <location>
        <begin position="106"/>
        <end position="231"/>
    </location>
</feature>
<feature type="active site" description="Nucleophile" evidence="1">
    <location>
        <position position="32"/>
    </location>
</feature>
<feature type="binding site" evidence="2">
    <location>
        <position position="59"/>
    </location>
    <ligand>
        <name>glutathione</name>
        <dbReference type="ChEBI" id="CHEBI:57925"/>
    </ligand>
</feature>
<feature type="binding site" evidence="2">
    <location>
        <position position="72"/>
    </location>
    <ligand>
        <name>glutathione</name>
        <dbReference type="ChEBI" id="CHEBI:57925"/>
    </ligand>
</feature>
<feature type="binding site" evidence="2">
    <location>
        <begin position="85"/>
        <end position="86"/>
    </location>
    <ligand>
        <name>glutathione</name>
        <dbReference type="ChEBI" id="CHEBI:57925"/>
    </ligand>
</feature>
<accession>Q8K2Q2</accession>
<reference key="1">
    <citation type="journal article" date="2005" name="Science">
        <title>The transcriptional landscape of the mammalian genome.</title>
        <authorList>
            <person name="Carninci P."/>
            <person name="Kasukawa T."/>
            <person name="Katayama S."/>
            <person name="Gough J."/>
            <person name="Frith M.C."/>
            <person name="Maeda N."/>
            <person name="Oyama R."/>
            <person name="Ravasi T."/>
            <person name="Lenhard B."/>
            <person name="Wells C."/>
            <person name="Kodzius R."/>
            <person name="Shimokawa K."/>
            <person name="Bajic V.B."/>
            <person name="Brenner S.E."/>
            <person name="Batalov S."/>
            <person name="Forrest A.R."/>
            <person name="Zavolan M."/>
            <person name="Davis M.J."/>
            <person name="Wilming L.G."/>
            <person name="Aidinis V."/>
            <person name="Allen J.E."/>
            <person name="Ambesi-Impiombato A."/>
            <person name="Apweiler R."/>
            <person name="Aturaliya R.N."/>
            <person name="Bailey T.L."/>
            <person name="Bansal M."/>
            <person name="Baxter L."/>
            <person name="Beisel K.W."/>
            <person name="Bersano T."/>
            <person name="Bono H."/>
            <person name="Chalk A.M."/>
            <person name="Chiu K.P."/>
            <person name="Choudhary V."/>
            <person name="Christoffels A."/>
            <person name="Clutterbuck D.R."/>
            <person name="Crowe M.L."/>
            <person name="Dalla E."/>
            <person name="Dalrymple B.P."/>
            <person name="de Bono B."/>
            <person name="Della Gatta G."/>
            <person name="di Bernardo D."/>
            <person name="Down T."/>
            <person name="Engstrom P."/>
            <person name="Fagiolini M."/>
            <person name="Faulkner G."/>
            <person name="Fletcher C.F."/>
            <person name="Fukushima T."/>
            <person name="Furuno M."/>
            <person name="Futaki S."/>
            <person name="Gariboldi M."/>
            <person name="Georgii-Hemming P."/>
            <person name="Gingeras T.R."/>
            <person name="Gojobori T."/>
            <person name="Green R.E."/>
            <person name="Gustincich S."/>
            <person name="Harbers M."/>
            <person name="Hayashi Y."/>
            <person name="Hensch T.K."/>
            <person name="Hirokawa N."/>
            <person name="Hill D."/>
            <person name="Huminiecki L."/>
            <person name="Iacono M."/>
            <person name="Ikeo K."/>
            <person name="Iwama A."/>
            <person name="Ishikawa T."/>
            <person name="Jakt M."/>
            <person name="Kanapin A."/>
            <person name="Katoh M."/>
            <person name="Kawasawa Y."/>
            <person name="Kelso J."/>
            <person name="Kitamura H."/>
            <person name="Kitano H."/>
            <person name="Kollias G."/>
            <person name="Krishnan S.P."/>
            <person name="Kruger A."/>
            <person name="Kummerfeld S.K."/>
            <person name="Kurochkin I.V."/>
            <person name="Lareau L.F."/>
            <person name="Lazarevic D."/>
            <person name="Lipovich L."/>
            <person name="Liu J."/>
            <person name="Liuni S."/>
            <person name="McWilliam S."/>
            <person name="Madan Babu M."/>
            <person name="Madera M."/>
            <person name="Marchionni L."/>
            <person name="Matsuda H."/>
            <person name="Matsuzawa S."/>
            <person name="Miki H."/>
            <person name="Mignone F."/>
            <person name="Miyake S."/>
            <person name="Morris K."/>
            <person name="Mottagui-Tabar S."/>
            <person name="Mulder N."/>
            <person name="Nakano N."/>
            <person name="Nakauchi H."/>
            <person name="Ng P."/>
            <person name="Nilsson R."/>
            <person name="Nishiguchi S."/>
            <person name="Nishikawa S."/>
            <person name="Nori F."/>
            <person name="Ohara O."/>
            <person name="Okazaki Y."/>
            <person name="Orlando V."/>
            <person name="Pang K.C."/>
            <person name="Pavan W.J."/>
            <person name="Pavesi G."/>
            <person name="Pesole G."/>
            <person name="Petrovsky N."/>
            <person name="Piazza S."/>
            <person name="Reed J."/>
            <person name="Reid J.F."/>
            <person name="Ring B.Z."/>
            <person name="Ringwald M."/>
            <person name="Rost B."/>
            <person name="Ruan Y."/>
            <person name="Salzberg S.L."/>
            <person name="Sandelin A."/>
            <person name="Schneider C."/>
            <person name="Schoenbach C."/>
            <person name="Sekiguchi K."/>
            <person name="Semple C.A."/>
            <person name="Seno S."/>
            <person name="Sessa L."/>
            <person name="Sheng Y."/>
            <person name="Shibata Y."/>
            <person name="Shimada H."/>
            <person name="Shimada K."/>
            <person name="Silva D."/>
            <person name="Sinclair B."/>
            <person name="Sperling S."/>
            <person name="Stupka E."/>
            <person name="Sugiura K."/>
            <person name="Sultana R."/>
            <person name="Takenaka Y."/>
            <person name="Taki K."/>
            <person name="Tammoja K."/>
            <person name="Tan S.L."/>
            <person name="Tang S."/>
            <person name="Taylor M.S."/>
            <person name="Tegner J."/>
            <person name="Teichmann S.A."/>
            <person name="Ueda H.R."/>
            <person name="van Nimwegen E."/>
            <person name="Verardo R."/>
            <person name="Wei C.L."/>
            <person name="Yagi K."/>
            <person name="Yamanishi H."/>
            <person name="Zabarovsky E."/>
            <person name="Zhu S."/>
            <person name="Zimmer A."/>
            <person name="Hide W."/>
            <person name="Bult C."/>
            <person name="Grimmond S.M."/>
            <person name="Teasdale R.D."/>
            <person name="Liu E.T."/>
            <person name="Brusic V."/>
            <person name="Quackenbush J."/>
            <person name="Wahlestedt C."/>
            <person name="Mattick J.S."/>
            <person name="Hume D.A."/>
            <person name="Kai C."/>
            <person name="Sasaki D."/>
            <person name="Tomaru Y."/>
            <person name="Fukuda S."/>
            <person name="Kanamori-Katayama M."/>
            <person name="Suzuki M."/>
            <person name="Aoki J."/>
            <person name="Arakawa T."/>
            <person name="Iida J."/>
            <person name="Imamura K."/>
            <person name="Itoh M."/>
            <person name="Kato T."/>
            <person name="Kawaji H."/>
            <person name="Kawagashira N."/>
            <person name="Kawashima T."/>
            <person name="Kojima M."/>
            <person name="Kondo S."/>
            <person name="Konno H."/>
            <person name="Nakano K."/>
            <person name="Ninomiya N."/>
            <person name="Nishio T."/>
            <person name="Okada M."/>
            <person name="Plessy C."/>
            <person name="Shibata K."/>
            <person name="Shiraki T."/>
            <person name="Suzuki S."/>
            <person name="Tagami M."/>
            <person name="Waki K."/>
            <person name="Watahiki A."/>
            <person name="Okamura-Oho Y."/>
            <person name="Suzuki H."/>
            <person name="Kawai J."/>
            <person name="Hayashizaki Y."/>
        </authorList>
    </citation>
    <scope>NUCLEOTIDE SEQUENCE [LARGE SCALE MRNA]</scope>
    <source>
        <strain>C57BL/6J</strain>
        <tissue>Testis</tissue>
    </source>
</reference>
<reference key="2">
    <citation type="journal article" date="2004" name="Genome Res.">
        <title>The status, quality, and expansion of the NIH full-length cDNA project: the Mammalian Gene Collection (MGC).</title>
        <authorList>
            <consortium name="The MGC Project Team"/>
        </authorList>
    </citation>
    <scope>NUCLEOTIDE SEQUENCE [LARGE SCALE MRNA]</scope>
    <source>
        <strain>FVB/N-3</strain>
        <tissue>Mammary tumor</tissue>
    </source>
</reference>
<reference key="3">
    <citation type="journal article" date="2010" name="Cell">
        <title>A tissue-specific atlas of mouse protein phosphorylation and expression.</title>
        <authorList>
            <person name="Huttlin E.L."/>
            <person name="Jedrychowski M.P."/>
            <person name="Elias J.E."/>
            <person name="Goswami T."/>
            <person name="Rad R."/>
            <person name="Beausoleil S.A."/>
            <person name="Villen J."/>
            <person name="Haas W."/>
            <person name="Sowa M.E."/>
            <person name="Gygi S.P."/>
        </authorList>
    </citation>
    <scope>IDENTIFICATION BY MASS SPECTROMETRY [LARGE SCALE ANALYSIS]</scope>
    <source>
        <tissue>Testis</tissue>
    </source>
</reference>
<comment type="function">
    <text evidence="2">Exhibits glutathione-dependent thiol transferase activity. Has high dehydroascorbate reductase activity and may contribute to the recycling of ascorbic acid. Participates in the biotransformation of inorganic arsenic and reduces monomethylarsonic acid (MMA).</text>
</comment>
<comment type="catalytic activity">
    <reaction evidence="2">
        <text>RX + glutathione = an S-substituted glutathione + a halide anion + H(+)</text>
        <dbReference type="Rhea" id="RHEA:16437"/>
        <dbReference type="ChEBI" id="CHEBI:15378"/>
        <dbReference type="ChEBI" id="CHEBI:16042"/>
        <dbReference type="ChEBI" id="CHEBI:17792"/>
        <dbReference type="ChEBI" id="CHEBI:57925"/>
        <dbReference type="ChEBI" id="CHEBI:90779"/>
        <dbReference type="EC" id="2.5.1.18"/>
    </reaction>
</comment>
<comment type="catalytic activity">
    <reaction evidence="2">
        <text>L-dehydroascorbate + 2 glutathione = glutathione disulfide + L-ascorbate</text>
        <dbReference type="Rhea" id="RHEA:24424"/>
        <dbReference type="ChEBI" id="CHEBI:38290"/>
        <dbReference type="ChEBI" id="CHEBI:57925"/>
        <dbReference type="ChEBI" id="CHEBI:58297"/>
        <dbReference type="ChEBI" id="CHEBI:58539"/>
        <dbReference type="EC" id="1.8.5.1"/>
    </reaction>
</comment>
<comment type="catalytic activity">
    <reaction evidence="2">
        <text>methylarsonate + 2 glutathione + H(+) = methylarsonous acid + glutathione disulfide + H2O</text>
        <dbReference type="Rhea" id="RHEA:15969"/>
        <dbReference type="ChEBI" id="CHEBI:15377"/>
        <dbReference type="ChEBI" id="CHEBI:15378"/>
        <dbReference type="ChEBI" id="CHEBI:17826"/>
        <dbReference type="ChEBI" id="CHEBI:33409"/>
        <dbReference type="ChEBI" id="CHEBI:57925"/>
        <dbReference type="ChEBI" id="CHEBI:58297"/>
        <dbReference type="EC" id="1.20.4.2"/>
    </reaction>
</comment>
<comment type="similarity">
    <text evidence="3">Belongs to the GST superfamily. Omega family.</text>
</comment>
<sequence length="248" mass="28599">MSGDLSRCLGKGSCPPGPVPEGVIRIYSMRFCPYSHRARLVLKAKGIRHEVININLKSKPDWYYTKHPFGQIPVLENSQCQLVYESVIACEYLDDVYPGRKLFPYDPYERARQKMLLELFCKVPPLSKECLIALRCGRDCTDLKVALRQELCNMEEILEYQNTTFFGGDCISMIDYLVWPWFERLDVYGLADCVNHTPMLRLWIASMKQDPAVCALHTDKSVFLGFLNLYFQNNPCAFDFGLCNPIIR</sequence>
<organism>
    <name type="scientific">Mus musculus</name>
    <name type="common">Mouse</name>
    <dbReference type="NCBI Taxonomy" id="10090"/>
    <lineage>
        <taxon>Eukaryota</taxon>
        <taxon>Metazoa</taxon>
        <taxon>Chordata</taxon>
        <taxon>Craniata</taxon>
        <taxon>Vertebrata</taxon>
        <taxon>Euteleostomi</taxon>
        <taxon>Mammalia</taxon>
        <taxon>Eutheria</taxon>
        <taxon>Euarchontoglires</taxon>
        <taxon>Glires</taxon>
        <taxon>Rodentia</taxon>
        <taxon>Myomorpha</taxon>
        <taxon>Muroidea</taxon>
        <taxon>Muridae</taxon>
        <taxon>Murinae</taxon>
        <taxon>Mus</taxon>
        <taxon>Mus</taxon>
    </lineage>
</organism>
<proteinExistence type="evidence at protein level"/>
<name>GSTO2_MOUSE</name>
<evidence type="ECO:0000250" key="1">
    <source>
        <dbReference type="UniProtKB" id="P78417"/>
    </source>
</evidence>
<evidence type="ECO:0000250" key="2">
    <source>
        <dbReference type="UniProtKB" id="Q9H4Y5"/>
    </source>
</evidence>
<evidence type="ECO:0000305" key="3"/>
<dbReference type="EC" id="2.5.1.18" evidence="2"/>
<dbReference type="EC" id="1.8.5.1" evidence="2"/>
<dbReference type="EC" id="1.20.4.2" evidence="2"/>
<dbReference type="EMBL" id="AK077086">
    <property type="protein sequence ID" value="BAC36604.1"/>
    <property type="molecule type" value="mRNA"/>
</dbReference>
<dbReference type="EMBL" id="BC030371">
    <property type="protein sequence ID" value="AAH30371.1"/>
    <property type="molecule type" value="mRNA"/>
</dbReference>
<dbReference type="CCDS" id="CCDS29894.1"/>
<dbReference type="RefSeq" id="NP_080895.2">
    <property type="nucleotide sequence ID" value="NM_026619.2"/>
</dbReference>
<dbReference type="RefSeq" id="NP_084327.1">
    <property type="nucleotide sequence ID" value="NM_030051.1"/>
</dbReference>
<dbReference type="RefSeq" id="XP_030106922.1">
    <property type="nucleotide sequence ID" value="XM_030251062.2"/>
</dbReference>
<dbReference type="RefSeq" id="XP_030106923.1">
    <property type="nucleotide sequence ID" value="XM_030251063.1"/>
</dbReference>
<dbReference type="RefSeq" id="XP_030106924.1">
    <property type="nucleotide sequence ID" value="XM_030251064.2"/>
</dbReference>
<dbReference type="RefSeq" id="XP_036017568.1">
    <property type="nucleotide sequence ID" value="XM_036161675.1"/>
</dbReference>
<dbReference type="SMR" id="Q8K2Q2"/>
<dbReference type="FunCoup" id="Q8K2Q2">
    <property type="interactions" value="708"/>
</dbReference>
<dbReference type="IntAct" id="Q8K2Q2">
    <property type="interactions" value="1"/>
</dbReference>
<dbReference type="STRING" id="10090.ENSMUSP00000052592"/>
<dbReference type="PhosphoSitePlus" id="Q8K2Q2"/>
<dbReference type="SwissPalm" id="Q8K2Q2"/>
<dbReference type="jPOST" id="Q8K2Q2"/>
<dbReference type="PaxDb" id="10090-ENSMUSP00000052592"/>
<dbReference type="ProteomicsDB" id="271182"/>
<dbReference type="Antibodypedia" id="31611">
    <property type="antibodies" value="315 antibodies from 29 providers"/>
</dbReference>
<dbReference type="DNASU" id="68214"/>
<dbReference type="Ensembl" id="ENSMUST00000056159.11">
    <property type="protein sequence ID" value="ENSMUSP00000052592.5"/>
    <property type="gene ID" value="ENSMUSG00000025069.16"/>
</dbReference>
<dbReference type="Ensembl" id="ENSMUST00000120645.8">
    <property type="protein sequence ID" value="ENSMUSP00000113409.2"/>
    <property type="gene ID" value="ENSMUSG00000025069.16"/>
</dbReference>
<dbReference type="Ensembl" id="ENSMUST00000135016.3">
    <property type="protein sequence ID" value="ENSMUSP00000119680.3"/>
    <property type="gene ID" value="ENSMUSG00000025069.16"/>
</dbReference>
<dbReference type="GeneID" id="68214"/>
<dbReference type="KEGG" id="mmu:68214"/>
<dbReference type="UCSC" id="uc008hvr.1">
    <property type="organism name" value="mouse"/>
</dbReference>
<dbReference type="AGR" id="MGI:1915464"/>
<dbReference type="CTD" id="119391"/>
<dbReference type="MGI" id="MGI:1915464">
    <property type="gene designation" value="Gsto2"/>
</dbReference>
<dbReference type="VEuPathDB" id="HostDB:ENSMUSG00000025069"/>
<dbReference type="eggNOG" id="KOG0406">
    <property type="taxonomic scope" value="Eukaryota"/>
</dbReference>
<dbReference type="GeneTree" id="ENSGT00940000162030"/>
<dbReference type="InParanoid" id="Q8K2Q2"/>
<dbReference type="OMA" id="LDDTYPG"/>
<dbReference type="OrthoDB" id="4951845at2759"/>
<dbReference type="PhylomeDB" id="Q8K2Q2"/>
<dbReference type="TreeFam" id="TF105325"/>
<dbReference type="Reactome" id="R-MMU-156590">
    <property type="pathway name" value="Glutathione conjugation"/>
</dbReference>
<dbReference type="Reactome" id="R-MMU-196836">
    <property type="pathway name" value="Vitamin C (ascorbate) metabolism"/>
</dbReference>
<dbReference type="BioGRID-ORCS" id="68214">
    <property type="hits" value="1 hit in 77 CRISPR screens"/>
</dbReference>
<dbReference type="PRO" id="PR:Q8K2Q2"/>
<dbReference type="Proteomes" id="UP000000589">
    <property type="component" value="Chromosome 19"/>
</dbReference>
<dbReference type="RNAct" id="Q8K2Q2">
    <property type="molecule type" value="protein"/>
</dbReference>
<dbReference type="Bgee" id="ENSMUSG00000025069">
    <property type="expression patterns" value="Expressed in spermatid and 99 other cell types or tissues"/>
</dbReference>
<dbReference type="ExpressionAtlas" id="Q8K2Q2">
    <property type="expression patterns" value="baseline and differential"/>
</dbReference>
<dbReference type="GO" id="GO:0005737">
    <property type="term" value="C:cytoplasm"/>
    <property type="evidence" value="ECO:0007669"/>
    <property type="project" value="InterPro"/>
</dbReference>
<dbReference type="GO" id="GO:0045174">
    <property type="term" value="F:glutathione dehydrogenase (ascorbate) activity"/>
    <property type="evidence" value="ECO:0000250"/>
    <property type="project" value="UniProtKB"/>
</dbReference>
<dbReference type="GO" id="GO:0004364">
    <property type="term" value="F:glutathione transferase activity"/>
    <property type="evidence" value="ECO:0007669"/>
    <property type="project" value="UniProtKB-EC"/>
</dbReference>
<dbReference type="GO" id="GO:0042802">
    <property type="term" value="F:identical protein binding"/>
    <property type="evidence" value="ECO:0007669"/>
    <property type="project" value="Ensembl"/>
</dbReference>
<dbReference type="GO" id="GO:0050610">
    <property type="term" value="F:methylarsonate reductase activity"/>
    <property type="evidence" value="ECO:0007669"/>
    <property type="project" value="UniProtKB-EC"/>
</dbReference>
<dbReference type="GO" id="GO:0016491">
    <property type="term" value="F:oxidoreductase activity"/>
    <property type="evidence" value="ECO:0000250"/>
    <property type="project" value="UniProtKB"/>
</dbReference>
<dbReference type="GO" id="GO:0071243">
    <property type="term" value="P:cellular response to arsenic-containing substance"/>
    <property type="evidence" value="ECO:0000250"/>
    <property type="project" value="UniProtKB"/>
</dbReference>
<dbReference type="GO" id="GO:0019852">
    <property type="term" value="P:L-ascorbic acid metabolic process"/>
    <property type="evidence" value="ECO:0000250"/>
    <property type="project" value="UniProtKB"/>
</dbReference>
<dbReference type="GO" id="GO:0006805">
    <property type="term" value="P:xenobiotic metabolic process"/>
    <property type="evidence" value="ECO:0000250"/>
    <property type="project" value="UniProtKB"/>
</dbReference>
<dbReference type="CDD" id="cd03184">
    <property type="entry name" value="GST_C_Omega"/>
    <property type="match status" value="1"/>
</dbReference>
<dbReference type="CDD" id="cd03055">
    <property type="entry name" value="GST_N_Omega"/>
    <property type="match status" value="1"/>
</dbReference>
<dbReference type="FunFam" id="3.40.30.10:FF:000075">
    <property type="entry name" value="Glutathione S-transferase omega-1"/>
    <property type="match status" value="1"/>
</dbReference>
<dbReference type="FunFam" id="1.20.1050.10:FF:000100">
    <property type="entry name" value="Glutathione S-transferase omega-2"/>
    <property type="match status" value="1"/>
</dbReference>
<dbReference type="Gene3D" id="1.20.1050.10">
    <property type="match status" value="1"/>
</dbReference>
<dbReference type="Gene3D" id="3.40.30.10">
    <property type="entry name" value="Glutaredoxin"/>
    <property type="match status" value="1"/>
</dbReference>
<dbReference type="InterPro" id="IPR010987">
    <property type="entry name" value="Glutathione-S-Trfase_C-like"/>
</dbReference>
<dbReference type="InterPro" id="IPR036282">
    <property type="entry name" value="Glutathione-S-Trfase_C_sf"/>
</dbReference>
<dbReference type="InterPro" id="IPR040079">
    <property type="entry name" value="Glutathione_S-Trfase"/>
</dbReference>
<dbReference type="InterPro" id="IPR004045">
    <property type="entry name" value="Glutathione_S-Trfase_N"/>
</dbReference>
<dbReference type="InterPro" id="IPR005442">
    <property type="entry name" value="GST_omega"/>
</dbReference>
<dbReference type="InterPro" id="IPR050983">
    <property type="entry name" value="GST_Omega/HSP26"/>
</dbReference>
<dbReference type="InterPro" id="IPR036249">
    <property type="entry name" value="Thioredoxin-like_sf"/>
</dbReference>
<dbReference type="PANTHER" id="PTHR43968">
    <property type="match status" value="1"/>
</dbReference>
<dbReference type="PANTHER" id="PTHR43968:SF4">
    <property type="entry name" value="GLUTATHIONE S-TRANSFERASE OMEGA-2"/>
    <property type="match status" value="1"/>
</dbReference>
<dbReference type="Pfam" id="PF13409">
    <property type="entry name" value="GST_N_2"/>
    <property type="match status" value="1"/>
</dbReference>
<dbReference type="PRINTS" id="PR01625">
    <property type="entry name" value="GSTRNSFRASEO"/>
</dbReference>
<dbReference type="SFLD" id="SFLDS00019">
    <property type="entry name" value="Glutathione_Transferase_(cytos"/>
    <property type="match status" value="1"/>
</dbReference>
<dbReference type="SFLD" id="SFLDG00358">
    <property type="entry name" value="Main_(cytGST)"/>
    <property type="match status" value="1"/>
</dbReference>
<dbReference type="SUPFAM" id="SSF47616">
    <property type="entry name" value="GST C-terminal domain-like"/>
    <property type="match status" value="1"/>
</dbReference>
<dbReference type="SUPFAM" id="SSF52833">
    <property type="entry name" value="Thioredoxin-like"/>
    <property type="match status" value="1"/>
</dbReference>
<dbReference type="PROSITE" id="PS50405">
    <property type="entry name" value="GST_CTER"/>
    <property type="match status" value="1"/>
</dbReference>
<dbReference type="PROSITE" id="PS50404">
    <property type="entry name" value="GST_NTER"/>
    <property type="match status" value="1"/>
</dbReference>
<keyword id="KW-0560">Oxidoreductase</keyword>
<keyword id="KW-1185">Reference proteome</keyword>
<keyword id="KW-0808">Transferase</keyword>
<protein>
    <recommendedName>
        <fullName>Glutathione S-transferase omega-2</fullName>
        <shortName>GSTO-2</shortName>
        <ecNumber evidence="2">2.5.1.18</ecNumber>
    </recommendedName>
    <alternativeName>
        <fullName>Glutathione S-transferase omega 2-2</fullName>
        <shortName>GSTO 2-2</shortName>
    </alternativeName>
    <alternativeName>
        <fullName>Glutathione-dependent dehydroascorbate reductase</fullName>
        <ecNumber evidence="2">1.8.5.1</ecNumber>
    </alternativeName>
    <alternativeName>
        <fullName>Monomethylarsonic acid reductase</fullName>
        <shortName>MMA(V) reductase</shortName>
        <ecNumber evidence="2">1.20.4.2</ecNumber>
    </alternativeName>
</protein>